<feature type="propeptide" id="PRO_0000013173" evidence="1">
    <location>
        <begin position="1"/>
        <end position="15"/>
    </location>
</feature>
<feature type="chain" id="PRO_0000013174" description="Hyaluronan and proteoglycan link protein 1">
    <location>
        <begin position="16"/>
        <end position="354"/>
    </location>
</feature>
<feature type="domain" description="Ig-like V-type">
    <location>
        <begin position="38"/>
        <end position="152"/>
    </location>
</feature>
<feature type="domain" description="Link 1" evidence="3">
    <location>
        <begin position="159"/>
        <end position="254"/>
    </location>
</feature>
<feature type="domain" description="Link 2" evidence="3">
    <location>
        <begin position="259"/>
        <end position="351"/>
    </location>
</feature>
<feature type="glycosylation site" description="N-linked (GlcNAc...) asparagine" evidence="2">
    <location>
        <position position="21"/>
    </location>
</feature>
<feature type="glycosylation site" description="N-linked (GlcNAc...) asparagine" evidence="2">
    <location>
        <position position="56"/>
    </location>
</feature>
<feature type="disulfide bond" evidence="1">
    <location>
        <begin position="61"/>
        <end position="139"/>
    </location>
</feature>
<feature type="disulfide bond" evidence="1">
    <location>
        <begin position="181"/>
        <end position="252"/>
    </location>
</feature>
<feature type="disulfide bond" evidence="1">
    <location>
        <begin position="205"/>
        <end position="226"/>
    </location>
</feature>
<feature type="disulfide bond" evidence="1">
    <location>
        <begin position="279"/>
        <end position="349"/>
    </location>
</feature>
<feature type="disulfide bond" evidence="1">
    <location>
        <begin position="304"/>
        <end position="325"/>
    </location>
</feature>
<keyword id="KW-1015">Disulfide bond</keyword>
<keyword id="KW-0272">Extracellular matrix</keyword>
<keyword id="KW-0325">Glycoprotein</keyword>
<keyword id="KW-0373">Hyaluronic acid</keyword>
<keyword id="KW-0393">Immunoglobulin domain</keyword>
<keyword id="KW-1185">Reference proteome</keyword>
<keyword id="KW-0677">Repeat</keyword>
<keyword id="KW-0964">Secreted</keyword>
<proteinExistence type="evidence at transcript level"/>
<name>HPLN1_BOVIN</name>
<organism>
    <name type="scientific">Bos taurus</name>
    <name type="common">Bovine</name>
    <dbReference type="NCBI Taxonomy" id="9913"/>
    <lineage>
        <taxon>Eukaryota</taxon>
        <taxon>Metazoa</taxon>
        <taxon>Chordata</taxon>
        <taxon>Craniata</taxon>
        <taxon>Vertebrata</taxon>
        <taxon>Euteleostomi</taxon>
        <taxon>Mammalia</taxon>
        <taxon>Eutheria</taxon>
        <taxon>Laurasiatheria</taxon>
        <taxon>Artiodactyla</taxon>
        <taxon>Ruminantia</taxon>
        <taxon>Pecora</taxon>
        <taxon>Bovidae</taxon>
        <taxon>Bovinae</taxon>
        <taxon>Bos</taxon>
    </lineage>
</organism>
<dbReference type="EMBL" id="U02292">
    <property type="protein sequence ID" value="AAC04311.1"/>
    <property type="molecule type" value="mRNA"/>
</dbReference>
<dbReference type="PIR" id="A60141">
    <property type="entry name" value="A29165"/>
</dbReference>
<dbReference type="RefSeq" id="NP_776713.1">
    <property type="nucleotide sequence ID" value="NM_174288.1"/>
</dbReference>
<dbReference type="RefSeq" id="XP_005209775.1">
    <property type="nucleotide sequence ID" value="XM_005209718.4"/>
</dbReference>
<dbReference type="RefSeq" id="XP_015327843.1">
    <property type="nucleotide sequence ID" value="XM_015472357.1"/>
</dbReference>
<dbReference type="SMR" id="P55252"/>
<dbReference type="FunCoup" id="P55252">
    <property type="interactions" value="273"/>
</dbReference>
<dbReference type="STRING" id="9913.ENSBTAP00000072384"/>
<dbReference type="GlyCosmos" id="P55252">
    <property type="glycosylation" value="2 sites, No reported glycans"/>
</dbReference>
<dbReference type="GlyGen" id="P55252">
    <property type="glycosylation" value="2 sites"/>
</dbReference>
<dbReference type="PaxDb" id="9913-ENSBTAP00000016468"/>
<dbReference type="GeneID" id="281717"/>
<dbReference type="KEGG" id="bta:281717"/>
<dbReference type="CTD" id="1404"/>
<dbReference type="VEuPathDB" id="HostDB:ENSBTAG00000012411"/>
<dbReference type="eggNOG" id="ENOG502QRAR">
    <property type="taxonomic scope" value="Eukaryota"/>
</dbReference>
<dbReference type="HOGENOM" id="CLU_052285_1_0_1"/>
<dbReference type="InParanoid" id="P55252"/>
<dbReference type="OMA" id="ERACHDQ"/>
<dbReference type="OrthoDB" id="5359219at2759"/>
<dbReference type="TreeFam" id="TF332134"/>
<dbReference type="Reactome" id="R-BTA-3000178">
    <property type="pathway name" value="ECM proteoglycans"/>
</dbReference>
<dbReference type="Proteomes" id="UP000009136">
    <property type="component" value="Chromosome 7"/>
</dbReference>
<dbReference type="Bgee" id="ENSBTAG00000012411">
    <property type="expression patterns" value="Expressed in Ammon's horn and 60 other cell types or tissues"/>
</dbReference>
<dbReference type="GO" id="GO:0005615">
    <property type="term" value="C:extracellular space"/>
    <property type="evidence" value="ECO:0000318"/>
    <property type="project" value="GO_Central"/>
</dbReference>
<dbReference type="GO" id="GO:0072534">
    <property type="term" value="C:perineuronal net"/>
    <property type="evidence" value="ECO:0000318"/>
    <property type="project" value="GO_Central"/>
</dbReference>
<dbReference type="GO" id="GO:0045202">
    <property type="term" value="C:synapse"/>
    <property type="evidence" value="ECO:0000318"/>
    <property type="project" value="GO_Central"/>
</dbReference>
<dbReference type="GO" id="GO:0005540">
    <property type="term" value="F:hyaluronic acid binding"/>
    <property type="evidence" value="ECO:0007669"/>
    <property type="project" value="UniProtKB-KW"/>
</dbReference>
<dbReference type="GO" id="GO:0007155">
    <property type="term" value="P:cell adhesion"/>
    <property type="evidence" value="ECO:0007669"/>
    <property type="project" value="InterPro"/>
</dbReference>
<dbReference type="GO" id="GO:0007417">
    <property type="term" value="P:central nervous system development"/>
    <property type="evidence" value="ECO:0000318"/>
    <property type="project" value="GO_Central"/>
</dbReference>
<dbReference type="GO" id="GO:0001501">
    <property type="term" value="P:skeletal system development"/>
    <property type="evidence" value="ECO:0000318"/>
    <property type="project" value="GO_Central"/>
</dbReference>
<dbReference type="CDD" id="cd05877">
    <property type="entry name" value="Ig_LP_like"/>
    <property type="match status" value="1"/>
</dbReference>
<dbReference type="CDD" id="cd03518">
    <property type="entry name" value="Link_domain_HAPLN_module_1"/>
    <property type="match status" value="1"/>
</dbReference>
<dbReference type="CDD" id="cd03519">
    <property type="entry name" value="Link_domain_HAPLN_module_2"/>
    <property type="match status" value="1"/>
</dbReference>
<dbReference type="FunFam" id="2.60.40.10:FF:000631">
    <property type="entry name" value="Hyaluronan and proteoglycan link protein 1"/>
    <property type="match status" value="1"/>
</dbReference>
<dbReference type="FunFam" id="3.10.100.10:FF:000001">
    <property type="entry name" value="Hyaluronan proteoglycan link protein 1"/>
    <property type="match status" value="1"/>
</dbReference>
<dbReference type="FunFam" id="3.10.100.10:FF:000002">
    <property type="entry name" value="Hyaluronan proteoglycan link protein 1"/>
    <property type="match status" value="1"/>
</dbReference>
<dbReference type="Gene3D" id="2.60.40.10">
    <property type="entry name" value="Immunoglobulins"/>
    <property type="match status" value="1"/>
</dbReference>
<dbReference type="Gene3D" id="3.10.100.10">
    <property type="entry name" value="Mannose-Binding Protein A, subunit A"/>
    <property type="match status" value="2"/>
</dbReference>
<dbReference type="InterPro" id="IPR016186">
    <property type="entry name" value="C-type_lectin-like/link_sf"/>
</dbReference>
<dbReference type="InterPro" id="IPR016187">
    <property type="entry name" value="CTDL_fold"/>
</dbReference>
<dbReference type="InterPro" id="IPR050691">
    <property type="entry name" value="Hyaluronan_bind_Proteoglycan"/>
</dbReference>
<dbReference type="InterPro" id="IPR007110">
    <property type="entry name" value="Ig-like_dom"/>
</dbReference>
<dbReference type="InterPro" id="IPR036179">
    <property type="entry name" value="Ig-like_dom_sf"/>
</dbReference>
<dbReference type="InterPro" id="IPR013783">
    <property type="entry name" value="Ig-like_fold"/>
</dbReference>
<dbReference type="InterPro" id="IPR003599">
    <property type="entry name" value="Ig_sub"/>
</dbReference>
<dbReference type="InterPro" id="IPR013106">
    <property type="entry name" value="Ig_V-set"/>
</dbReference>
<dbReference type="InterPro" id="IPR000538">
    <property type="entry name" value="Link_dom"/>
</dbReference>
<dbReference type="PANTHER" id="PTHR22804">
    <property type="entry name" value="AGGRECAN/VERSICAN PROTEOGLYCAN"/>
    <property type="match status" value="1"/>
</dbReference>
<dbReference type="PANTHER" id="PTHR22804:SF10">
    <property type="entry name" value="HYALURONAN AND PROTEOGLYCAN LINK PROTEIN 1"/>
    <property type="match status" value="1"/>
</dbReference>
<dbReference type="Pfam" id="PF07686">
    <property type="entry name" value="V-set"/>
    <property type="match status" value="1"/>
</dbReference>
<dbReference type="Pfam" id="PF00193">
    <property type="entry name" value="Xlink"/>
    <property type="match status" value="2"/>
</dbReference>
<dbReference type="PRINTS" id="PR01265">
    <property type="entry name" value="LINKMODULE"/>
</dbReference>
<dbReference type="SMART" id="SM00409">
    <property type="entry name" value="IG"/>
    <property type="match status" value="1"/>
</dbReference>
<dbReference type="SMART" id="SM00406">
    <property type="entry name" value="IGv"/>
    <property type="match status" value="1"/>
</dbReference>
<dbReference type="SMART" id="SM00445">
    <property type="entry name" value="LINK"/>
    <property type="match status" value="2"/>
</dbReference>
<dbReference type="SUPFAM" id="SSF56436">
    <property type="entry name" value="C-type lectin-like"/>
    <property type="match status" value="2"/>
</dbReference>
<dbReference type="SUPFAM" id="SSF48726">
    <property type="entry name" value="Immunoglobulin"/>
    <property type="match status" value="1"/>
</dbReference>
<dbReference type="PROSITE" id="PS50835">
    <property type="entry name" value="IG_LIKE"/>
    <property type="match status" value="1"/>
</dbReference>
<dbReference type="PROSITE" id="PS01241">
    <property type="entry name" value="LINK_1"/>
    <property type="match status" value="2"/>
</dbReference>
<dbReference type="PROSITE" id="PS50963">
    <property type="entry name" value="LINK_2"/>
    <property type="match status" value="2"/>
</dbReference>
<comment type="function">
    <text>Stabilizes the aggregates of proteoglycan monomers with hyaluronic acid in the extracellular cartilage matrix.</text>
</comment>
<comment type="subcellular location">
    <subcellularLocation>
        <location>Secreted</location>
        <location>Extracellular space</location>
        <location>Extracellular matrix</location>
    </subcellularLocation>
</comment>
<comment type="similarity">
    <text evidence="4">Belongs to the HAPLN family.</text>
</comment>
<gene>
    <name type="primary">HAPLN1</name>
    <name type="synonym">CRTL1</name>
</gene>
<accession>P55252</accession>
<reference key="1">
    <citation type="journal article" date="1995" name="Comp. Biochem. Physiol.">
        <title>Bovine chondrocyte link protein cDNA sequence: interspecies conservation of primary structure and mRNA untranslated regions.</title>
        <authorList>
            <person name="Hering T.M."/>
            <person name="Kollar J."/>
            <person name="Huynh T.D."/>
            <person name="Sandell L.J."/>
        </authorList>
    </citation>
    <scope>NUCLEOTIDE SEQUENCE [MRNA]</scope>
    <source>
        <tissue>Cartilage</tissue>
    </source>
</reference>
<evidence type="ECO:0000250" key="1"/>
<evidence type="ECO:0000255" key="2"/>
<evidence type="ECO:0000255" key="3">
    <source>
        <dbReference type="PROSITE-ProRule" id="PRU00323"/>
    </source>
</evidence>
<evidence type="ECO:0000305" key="4"/>
<sequence>MKSLLLLVLISFCWADHHSDNYTVDHDRVIHIQAENGPRLLVEAEQAKVFSRRGGNVTLPCKFYRDPTAFGSGTHKIRIKWTKLTSDYLKEVDVFVSMGYHKKTYGGYHGRVFLKGGSDNDASLVITDLTLEDYGRYKCEVIEGLEDDTAVVALDLQGVVFPYFPRLGRYNLNFHEAQQACLDQDAVIASFDQLYDAWRSGLDWCNAGWLSDGSVQYPITKPREPCGGQNTVPGVRNYGFWDKDKSRYDVFCFTSNFNGRFYYLIHPTKLTYDEAVQACLNDGAQIAKVGQIFAAWKLLGYDRCDAGWLADGSVRYPISRPRRRCSPSEAAVRFVGFPDKKHKLYGVYCFRAYN</sequence>
<protein>
    <recommendedName>
        <fullName>Hyaluronan and proteoglycan link protein 1</fullName>
    </recommendedName>
    <alternativeName>
        <fullName>Cartilage-linking protein 1</fullName>
        <shortName>Cartilage-link protein</shortName>
    </alternativeName>
    <alternativeName>
        <fullName>Proteoglycan link protein</fullName>
    </alternativeName>
</protein>